<comment type="function">
    <text evidence="1">Molecular chaperone; assists the folding of proteins upon ATP hydrolysis. Known to play a role, in vitro, in the folding of actin and tubulin. In yeast may play a role in mitotic spindle formation (By similarity).</text>
</comment>
<comment type="subunit">
    <text evidence="1">Heterooligomeric complex of about 850 to 900 kDa that forms two stacked rings, 12 to 16 nm in diameter.</text>
</comment>
<comment type="subcellular location">
    <subcellularLocation>
        <location evidence="1">Cytoplasm</location>
    </subcellularLocation>
</comment>
<comment type="similarity">
    <text evidence="2">Belongs to the TCP-1 chaperonin family.</text>
</comment>
<proteinExistence type="inferred from homology"/>
<protein>
    <recommendedName>
        <fullName>T-complex protein 1 subunit theta</fullName>
        <shortName>TCP-1-theta</shortName>
    </recommendedName>
    <alternativeName>
        <fullName>CCT-theta</fullName>
    </alternativeName>
</protein>
<name>TCPQ_CANAX</name>
<accession>P47828</accession>
<keyword id="KW-0067">ATP-binding</keyword>
<keyword id="KW-0143">Chaperone</keyword>
<keyword id="KW-0963">Cytoplasm</keyword>
<keyword id="KW-0547">Nucleotide-binding</keyword>
<reference key="1">
    <citation type="journal article" date="1996" name="Yeast">
        <title>Review: the Cct eukaryotic chaperonin subunits of Saccharomyces cerevisiae and other yeasts.</title>
        <authorList>
            <person name="Stoldt V."/>
            <person name="Rademacher F."/>
            <person name="Kehren V."/>
            <person name="Ernst J.F."/>
            <person name="Sherman F."/>
        </authorList>
    </citation>
    <scope>NUCLEOTIDE SEQUENCE [GENOMIC DNA]</scope>
    <source>
        <strain>ATCC 10231 / CBS 6431 / CIP 48.72 / DSM 1386 / NBRC 1594</strain>
    </source>
</reference>
<reference key="2">
    <citation type="submission" date="1998-08" db="EMBL/GenBank/DDBJ databases">
        <authorList>
            <person name="Ernst J.F."/>
        </authorList>
    </citation>
    <scope>SEQUENCE REVISION</scope>
</reference>
<gene>
    <name type="primary">CCT8</name>
</gene>
<feature type="chain" id="PRO_0000128376" description="T-complex protein 1 subunit theta">
    <location>
        <begin position="1"/>
        <end position="540"/>
    </location>
</feature>
<organism>
    <name type="scientific">Candida albicans</name>
    <name type="common">Yeast</name>
    <dbReference type="NCBI Taxonomy" id="5476"/>
    <lineage>
        <taxon>Eukaryota</taxon>
        <taxon>Fungi</taxon>
        <taxon>Dikarya</taxon>
        <taxon>Ascomycota</taxon>
        <taxon>Saccharomycotina</taxon>
        <taxon>Pichiomycetes</taxon>
        <taxon>Debaryomycetaceae</taxon>
        <taxon>Candida/Lodderomyces clade</taxon>
        <taxon>Candida</taxon>
    </lineage>
</organism>
<sequence length="540" mass="58918">MSLKLPQAPNSGLFKQGYSSFSNADGAIIRNVEAVREIASILLTSMGPSGRNKIIVNKLGKKFITNDAATMLNELEIVHPVVKILIQASKQQEFEMGDNTNLVIILAGEFLNVAEKLLTLGLNVSEIIQGFNLANKFVMKTLDELVVEKVESFETDLLKAVKPVIAAKQYGVEDTIAKLVVDAVALVMKNGSFNVDNIRVVKVMGASLSQSQVVKGMVFPREPEGTVKNADQIQSCRVYQPHRYFHHRNQRYSCSSTMPRKCLISPRAKNNSWTSCARKSTIQGLRWLLPGSSVGELALHYLNKYGILVLRVPSKFDLRRICQVCGATPLPRLGAPTPDEMGEIDIIETKEIGGDRVTIFRQDESSSRTATIVVRGATQNNLDDIERAIDDGVNSIKGLIKDNRLLPGAGAVEIELMKRITAYQSTPGLLQLAIKSFAKAFEVIPRVLAETSGHDSSEILSKLHAAHAEDTGLRAGIDIDSGEVADTAVLDILATKKSAIDLAVDATNTILSIDQIIMAKRAGGPVMPQQPRPGNWDQDD</sequence>
<dbReference type="EMBL" id="U37371">
    <property type="protein sequence ID" value="AAC31764.1"/>
    <property type="molecule type" value="Genomic_DNA"/>
</dbReference>
<dbReference type="SMR" id="P47828"/>
<dbReference type="VEuPathDB" id="FungiDB:C1_00110W_A"/>
<dbReference type="VEuPathDB" id="FungiDB:CAWG_01354"/>
<dbReference type="BRENDA" id="3.6.4.B10">
    <property type="organism ID" value="1096"/>
</dbReference>
<dbReference type="GO" id="GO:0005832">
    <property type="term" value="C:chaperonin-containing T-complex"/>
    <property type="evidence" value="ECO:0007669"/>
    <property type="project" value="EnsemblFungi"/>
</dbReference>
<dbReference type="GO" id="GO:0005524">
    <property type="term" value="F:ATP binding"/>
    <property type="evidence" value="ECO:0007669"/>
    <property type="project" value="UniProtKB-KW"/>
</dbReference>
<dbReference type="GO" id="GO:0016887">
    <property type="term" value="F:ATP hydrolysis activity"/>
    <property type="evidence" value="ECO:0007669"/>
    <property type="project" value="InterPro"/>
</dbReference>
<dbReference type="GO" id="GO:0140662">
    <property type="term" value="F:ATP-dependent protein folding chaperone"/>
    <property type="evidence" value="ECO:0007669"/>
    <property type="project" value="InterPro"/>
</dbReference>
<dbReference type="GO" id="GO:0051082">
    <property type="term" value="F:unfolded protein binding"/>
    <property type="evidence" value="ECO:0007669"/>
    <property type="project" value="EnsemblFungi"/>
</dbReference>
<dbReference type="GO" id="GO:0051086">
    <property type="term" value="P:chaperone mediated protein folding independent of cofactor"/>
    <property type="evidence" value="ECO:0007669"/>
    <property type="project" value="EnsemblFungi"/>
</dbReference>
<dbReference type="CDD" id="cd03341">
    <property type="entry name" value="TCP1_theta"/>
    <property type="match status" value="1"/>
</dbReference>
<dbReference type="Gene3D" id="3.50.7.10">
    <property type="entry name" value="GroEL"/>
    <property type="match status" value="1"/>
</dbReference>
<dbReference type="Gene3D" id="1.10.560.10">
    <property type="entry name" value="GroEL-like equatorial domain"/>
    <property type="match status" value="1"/>
</dbReference>
<dbReference type="Gene3D" id="3.30.260.10">
    <property type="entry name" value="TCP-1-like chaperonin intermediate domain"/>
    <property type="match status" value="1"/>
</dbReference>
<dbReference type="InterPro" id="IPR012721">
    <property type="entry name" value="Chap_CCT_theta"/>
</dbReference>
<dbReference type="InterPro" id="IPR017998">
    <property type="entry name" value="Chaperone_TCP-1"/>
</dbReference>
<dbReference type="InterPro" id="IPR002194">
    <property type="entry name" value="Chaperonin_TCP-1_CS"/>
</dbReference>
<dbReference type="InterPro" id="IPR002423">
    <property type="entry name" value="Cpn60/GroEL/TCP-1"/>
</dbReference>
<dbReference type="InterPro" id="IPR027409">
    <property type="entry name" value="GroEL-like_apical_dom_sf"/>
</dbReference>
<dbReference type="InterPro" id="IPR027413">
    <property type="entry name" value="GROEL-like_equatorial_sf"/>
</dbReference>
<dbReference type="InterPro" id="IPR027410">
    <property type="entry name" value="TCP-1-like_intermed_sf"/>
</dbReference>
<dbReference type="NCBIfam" id="TIGR02346">
    <property type="entry name" value="chap_CCT_theta"/>
    <property type="match status" value="1"/>
</dbReference>
<dbReference type="PANTHER" id="PTHR11353">
    <property type="entry name" value="CHAPERONIN"/>
    <property type="match status" value="1"/>
</dbReference>
<dbReference type="Pfam" id="PF00118">
    <property type="entry name" value="Cpn60_TCP1"/>
    <property type="match status" value="1"/>
</dbReference>
<dbReference type="PRINTS" id="PR00304">
    <property type="entry name" value="TCOMPLEXTCP1"/>
</dbReference>
<dbReference type="SUPFAM" id="SSF52029">
    <property type="entry name" value="GroEL apical domain-like"/>
    <property type="match status" value="1"/>
</dbReference>
<dbReference type="SUPFAM" id="SSF48592">
    <property type="entry name" value="GroEL equatorial domain-like"/>
    <property type="match status" value="1"/>
</dbReference>
<dbReference type="SUPFAM" id="SSF54849">
    <property type="entry name" value="GroEL-intermediate domain like"/>
    <property type="match status" value="1"/>
</dbReference>
<dbReference type="PROSITE" id="PS00750">
    <property type="entry name" value="TCP1_1"/>
    <property type="match status" value="1"/>
</dbReference>
<dbReference type="PROSITE" id="PS00751">
    <property type="entry name" value="TCP1_2"/>
    <property type="match status" value="1"/>
</dbReference>
<evidence type="ECO:0000250" key="1"/>
<evidence type="ECO:0000305" key="2"/>